<feature type="chain" id="PRO_0000241794" description="Glycogen synthase">
    <location>
        <begin position="1"/>
        <end position="494"/>
    </location>
</feature>
<feature type="binding site" evidence="1">
    <location>
        <position position="15"/>
    </location>
    <ligand>
        <name>ADP-alpha-D-glucose</name>
        <dbReference type="ChEBI" id="CHEBI:57498"/>
    </ligand>
</feature>
<reference key="1">
    <citation type="journal article" date="2005" name="DNA Res.">
        <title>Complete genome sequence of the facultative anaerobic magnetotactic bacterium Magnetospirillum sp. strain AMB-1.</title>
        <authorList>
            <person name="Matsunaga T."/>
            <person name="Okamura Y."/>
            <person name="Fukuda Y."/>
            <person name="Wahyudi A.T."/>
            <person name="Murase Y."/>
            <person name="Takeyama H."/>
        </authorList>
    </citation>
    <scope>NUCLEOTIDE SEQUENCE [LARGE SCALE GENOMIC DNA]</scope>
    <source>
        <strain>ATCC 700264 / AMB-1</strain>
    </source>
</reference>
<dbReference type="EC" id="2.4.1.21" evidence="1"/>
<dbReference type="EMBL" id="AP007255">
    <property type="protein sequence ID" value="BAE50915.1"/>
    <property type="molecule type" value="Genomic_DNA"/>
</dbReference>
<dbReference type="RefSeq" id="WP_011384510.1">
    <property type="nucleotide sequence ID" value="NC_007626.1"/>
</dbReference>
<dbReference type="SMR" id="Q2W5G0"/>
<dbReference type="STRING" id="342108.amb2111"/>
<dbReference type="CAZy" id="GT5">
    <property type="family name" value="Glycosyltransferase Family 5"/>
</dbReference>
<dbReference type="KEGG" id="mag:amb2111"/>
<dbReference type="HOGENOM" id="CLU_009583_18_4_5"/>
<dbReference type="OrthoDB" id="9808590at2"/>
<dbReference type="UniPathway" id="UPA00164"/>
<dbReference type="Proteomes" id="UP000007058">
    <property type="component" value="Chromosome"/>
</dbReference>
<dbReference type="GO" id="GO:0005829">
    <property type="term" value="C:cytosol"/>
    <property type="evidence" value="ECO:0007669"/>
    <property type="project" value="TreeGrafter"/>
</dbReference>
<dbReference type="GO" id="GO:0009011">
    <property type="term" value="F:alpha-1,4-glucan glucosyltransferase (ADP-glucose donor) activity"/>
    <property type="evidence" value="ECO:0007669"/>
    <property type="project" value="UniProtKB-UniRule"/>
</dbReference>
<dbReference type="GO" id="GO:0004373">
    <property type="term" value="F:alpha-1,4-glucan glucosyltransferase (UDP-glucose donor) activity"/>
    <property type="evidence" value="ECO:0007669"/>
    <property type="project" value="InterPro"/>
</dbReference>
<dbReference type="GO" id="GO:0005978">
    <property type="term" value="P:glycogen biosynthetic process"/>
    <property type="evidence" value="ECO:0007669"/>
    <property type="project" value="UniProtKB-UniRule"/>
</dbReference>
<dbReference type="CDD" id="cd03791">
    <property type="entry name" value="GT5_Glycogen_synthase_DULL1-like"/>
    <property type="match status" value="1"/>
</dbReference>
<dbReference type="Gene3D" id="3.40.50.2000">
    <property type="entry name" value="Glycogen Phosphorylase B"/>
    <property type="match status" value="2"/>
</dbReference>
<dbReference type="HAMAP" id="MF_00484">
    <property type="entry name" value="Glycogen_synth"/>
    <property type="match status" value="1"/>
</dbReference>
<dbReference type="InterPro" id="IPR001296">
    <property type="entry name" value="Glyco_trans_1"/>
</dbReference>
<dbReference type="InterPro" id="IPR011835">
    <property type="entry name" value="GS/SS"/>
</dbReference>
<dbReference type="InterPro" id="IPR013534">
    <property type="entry name" value="Starch_synth_cat_dom"/>
</dbReference>
<dbReference type="NCBIfam" id="TIGR02095">
    <property type="entry name" value="glgA"/>
    <property type="match status" value="1"/>
</dbReference>
<dbReference type="NCBIfam" id="NF001899">
    <property type="entry name" value="PRK00654.1-2"/>
    <property type="match status" value="1"/>
</dbReference>
<dbReference type="PANTHER" id="PTHR45825:SF11">
    <property type="entry name" value="ALPHA AMYLASE DOMAIN-CONTAINING PROTEIN"/>
    <property type="match status" value="1"/>
</dbReference>
<dbReference type="PANTHER" id="PTHR45825">
    <property type="entry name" value="GRANULE-BOUND STARCH SYNTHASE 1, CHLOROPLASTIC/AMYLOPLASTIC"/>
    <property type="match status" value="1"/>
</dbReference>
<dbReference type="Pfam" id="PF08323">
    <property type="entry name" value="Glyco_transf_5"/>
    <property type="match status" value="1"/>
</dbReference>
<dbReference type="Pfam" id="PF00534">
    <property type="entry name" value="Glycos_transf_1"/>
    <property type="match status" value="1"/>
</dbReference>
<dbReference type="SUPFAM" id="SSF53756">
    <property type="entry name" value="UDP-Glycosyltransferase/glycogen phosphorylase"/>
    <property type="match status" value="1"/>
</dbReference>
<name>GLGA_PARM1</name>
<comment type="function">
    <text evidence="1">Synthesizes alpha-1,4-glucan chains using ADP-glucose.</text>
</comment>
<comment type="catalytic activity">
    <reaction evidence="1">
        <text>[(1-&gt;4)-alpha-D-glucosyl](n) + ADP-alpha-D-glucose = [(1-&gt;4)-alpha-D-glucosyl](n+1) + ADP + H(+)</text>
        <dbReference type="Rhea" id="RHEA:18189"/>
        <dbReference type="Rhea" id="RHEA-COMP:9584"/>
        <dbReference type="Rhea" id="RHEA-COMP:9587"/>
        <dbReference type="ChEBI" id="CHEBI:15378"/>
        <dbReference type="ChEBI" id="CHEBI:15444"/>
        <dbReference type="ChEBI" id="CHEBI:57498"/>
        <dbReference type="ChEBI" id="CHEBI:456216"/>
        <dbReference type="EC" id="2.4.1.21"/>
    </reaction>
</comment>
<comment type="pathway">
    <text evidence="1">Glycan biosynthesis; glycogen biosynthesis.</text>
</comment>
<comment type="similarity">
    <text evidence="1">Belongs to the glycosyltransferase 1 family. Bacterial/plant glycogen synthase subfamily.</text>
</comment>
<keyword id="KW-0320">Glycogen biosynthesis</keyword>
<keyword id="KW-0328">Glycosyltransferase</keyword>
<keyword id="KW-0808">Transferase</keyword>
<evidence type="ECO:0000255" key="1">
    <source>
        <dbReference type="HAMAP-Rule" id="MF_00484"/>
    </source>
</evidence>
<sequence length="494" mass="52711">MRVLFASSEVFPLVKTGGLADVSGALPAALAAAGEDVRILLPGYPDAIKASGAKKAVGSLGDPFGLGAEATLLSGKLPGSGVPVWLVDCPALFERAGGPYQDPQGRDWPDNALRFALLSWTAAHLCTENSPVKWRPQVLHANDWQTGLAPAYLHAWSPAQRPATVFTIHNIAYQGQFPRDLVPRLGFPPEMYAMDGFEYYDTLSFLKSGLFYSDRITTVSPRYAKEIQTPAFGCGMEGLLAHRAADLTGILNGADYEVWNPAADTHLDHAFTPGDAAGKACNKAALQAELGLSQAPDAPLMVIVSRLNDHKGMDLVLAALPNILKMGAQVAVVGTGDRPLEDGFRAAAAAHPTQVAARIGYSEPLAHRMMAGGDMLLMPSRFEPCGLTQFYAFRYGTVPVAHATGGLADTLVDTGYDTLMTGKANGFVFEHSNVGAFQWAVERAVGLYAKKDQWTRIVKACNAQDFGWGRSAGLYRDLYKSLTGNGGGKGKKKA</sequence>
<accession>Q2W5G0</accession>
<gene>
    <name evidence="1" type="primary">glgA</name>
    <name type="ordered locus">amb2111</name>
</gene>
<proteinExistence type="inferred from homology"/>
<organism>
    <name type="scientific">Paramagnetospirillum magneticum (strain ATCC 700264 / AMB-1)</name>
    <name type="common">Magnetospirillum magneticum</name>
    <dbReference type="NCBI Taxonomy" id="342108"/>
    <lineage>
        <taxon>Bacteria</taxon>
        <taxon>Pseudomonadati</taxon>
        <taxon>Pseudomonadota</taxon>
        <taxon>Alphaproteobacteria</taxon>
        <taxon>Rhodospirillales</taxon>
        <taxon>Magnetospirillaceae</taxon>
        <taxon>Paramagnetospirillum</taxon>
    </lineage>
</organism>
<protein>
    <recommendedName>
        <fullName evidence="1">Glycogen synthase</fullName>
        <ecNumber evidence="1">2.4.1.21</ecNumber>
    </recommendedName>
    <alternativeName>
        <fullName evidence="1">Starch [bacterial glycogen] synthase</fullName>
    </alternativeName>
</protein>